<reference key="1">
    <citation type="journal article" date="2006" name="Proc. Natl. Acad. Sci. U.S.A.">
        <title>The complete genome sequence of a chronic atrophic gastritis Helicobacter pylori strain: evolution during disease progression.</title>
        <authorList>
            <person name="Oh J.D."/>
            <person name="Kling-Baeckhed H."/>
            <person name="Giannakis M."/>
            <person name="Xu J."/>
            <person name="Fulton R.S."/>
            <person name="Fulton L.A."/>
            <person name="Cordum H.S."/>
            <person name="Wang C."/>
            <person name="Elliott G."/>
            <person name="Edwards J."/>
            <person name="Mardis E.R."/>
            <person name="Engstrand L.G."/>
            <person name="Gordon J.I."/>
        </authorList>
    </citation>
    <scope>NUCLEOTIDE SEQUENCE [LARGE SCALE GENOMIC DNA]</scope>
    <source>
        <strain>HPAG1</strain>
    </source>
</reference>
<comment type="function">
    <text evidence="1">Catalyzes the conversion of dihydroorotate to orotate with quinone as electron acceptor.</text>
</comment>
<comment type="catalytic activity">
    <reaction evidence="1">
        <text>(S)-dihydroorotate + a quinone = orotate + a quinol</text>
        <dbReference type="Rhea" id="RHEA:30187"/>
        <dbReference type="ChEBI" id="CHEBI:24646"/>
        <dbReference type="ChEBI" id="CHEBI:30839"/>
        <dbReference type="ChEBI" id="CHEBI:30864"/>
        <dbReference type="ChEBI" id="CHEBI:132124"/>
        <dbReference type="EC" id="1.3.5.2"/>
    </reaction>
</comment>
<comment type="cofactor">
    <cofactor evidence="1">
        <name>FMN</name>
        <dbReference type="ChEBI" id="CHEBI:58210"/>
    </cofactor>
    <text evidence="1">Binds 1 FMN per subunit.</text>
</comment>
<comment type="pathway">
    <text evidence="1">Pyrimidine metabolism; UMP biosynthesis via de novo pathway; orotate from (S)-dihydroorotate (quinone route): step 1/1.</text>
</comment>
<comment type="subunit">
    <text evidence="1">Monomer.</text>
</comment>
<comment type="subcellular location">
    <subcellularLocation>
        <location evidence="1">Cell membrane</location>
        <topology evidence="1">Peripheral membrane protein</topology>
    </subcellularLocation>
</comment>
<comment type="similarity">
    <text evidence="1">Belongs to the dihydroorotate dehydrogenase family. Type 2 subfamily.</text>
</comment>
<organism>
    <name type="scientific">Helicobacter pylori (strain HPAG1)</name>
    <dbReference type="NCBI Taxonomy" id="357544"/>
    <lineage>
        <taxon>Bacteria</taxon>
        <taxon>Pseudomonadati</taxon>
        <taxon>Campylobacterota</taxon>
        <taxon>Epsilonproteobacteria</taxon>
        <taxon>Campylobacterales</taxon>
        <taxon>Helicobacteraceae</taxon>
        <taxon>Helicobacter</taxon>
    </lineage>
</organism>
<keyword id="KW-1003">Cell membrane</keyword>
<keyword id="KW-0285">Flavoprotein</keyword>
<keyword id="KW-0288">FMN</keyword>
<keyword id="KW-0472">Membrane</keyword>
<keyword id="KW-0560">Oxidoreductase</keyword>
<keyword id="KW-0665">Pyrimidine biosynthesis</keyword>
<protein>
    <recommendedName>
        <fullName evidence="1">Dihydroorotate dehydrogenase (quinone)</fullName>
        <ecNumber evidence="1">1.3.5.2</ecNumber>
    </recommendedName>
    <alternativeName>
        <fullName evidence="1">DHOdehase</fullName>
        <shortName evidence="1">DHOD</shortName>
        <shortName evidence="1">DHODase</shortName>
    </alternativeName>
    <alternativeName>
        <fullName evidence="1">Dihydroorotate oxidase</fullName>
    </alternativeName>
</protein>
<accession>Q1CU70</accession>
<gene>
    <name evidence="1" type="primary">pyrD</name>
    <name type="ordered locus">HPAG1_0435</name>
</gene>
<sequence>MLYSLVKKYLFSLDAEDAHEKVCKILRMLSSSPFLCNLIDSQWGYKNPKLENEILGLHFPNPLGLAAGFDKNASMLRALTAFGFGYLEAGTLTNEAQMGNERPRLFRHIEEESLQNAMGFNNYGAVLGARSFKRFAPYKTPIGINLGKNKHIEQAHALEDYKAVLNQCLNIGDYYTFNLSSPNTPNLRDLQNKAFVHELFCMAKEMTHKPLFLKIAPDLETDDMLEIVNSAIEAGAHGIIATNTTIDKSLVFAPKEMGGLSGKCLTKKSREIFKELAKAFFNKTILVSVGGISGAKEAYERIKMGASLLQIYSAFIYNGPNLCQNILKDLVKLLQKDGFLSVKEAIGADLR</sequence>
<dbReference type="EC" id="1.3.5.2" evidence="1"/>
<dbReference type="EMBL" id="CP000241">
    <property type="protein sequence ID" value="ABF84502.1"/>
    <property type="molecule type" value="Genomic_DNA"/>
</dbReference>
<dbReference type="RefSeq" id="WP_000967188.1">
    <property type="nucleotide sequence ID" value="NC_008086.1"/>
</dbReference>
<dbReference type="SMR" id="Q1CU70"/>
<dbReference type="KEGG" id="hpa:HPAG1_0435"/>
<dbReference type="HOGENOM" id="CLU_013640_2_0_7"/>
<dbReference type="UniPathway" id="UPA00070">
    <property type="reaction ID" value="UER00946"/>
</dbReference>
<dbReference type="GO" id="GO:0005737">
    <property type="term" value="C:cytoplasm"/>
    <property type="evidence" value="ECO:0007669"/>
    <property type="project" value="InterPro"/>
</dbReference>
<dbReference type="GO" id="GO:0005886">
    <property type="term" value="C:plasma membrane"/>
    <property type="evidence" value="ECO:0007669"/>
    <property type="project" value="UniProtKB-SubCell"/>
</dbReference>
<dbReference type="GO" id="GO:0106430">
    <property type="term" value="F:dihydroorotate dehydrogenase (quinone) activity"/>
    <property type="evidence" value="ECO:0007669"/>
    <property type="project" value="UniProtKB-EC"/>
</dbReference>
<dbReference type="GO" id="GO:0006207">
    <property type="term" value="P:'de novo' pyrimidine nucleobase biosynthetic process"/>
    <property type="evidence" value="ECO:0007669"/>
    <property type="project" value="InterPro"/>
</dbReference>
<dbReference type="GO" id="GO:0044205">
    <property type="term" value="P:'de novo' UMP biosynthetic process"/>
    <property type="evidence" value="ECO:0007669"/>
    <property type="project" value="UniProtKB-UniRule"/>
</dbReference>
<dbReference type="CDD" id="cd04738">
    <property type="entry name" value="DHOD_2_like"/>
    <property type="match status" value="1"/>
</dbReference>
<dbReference type="FunFam" id="3.20.20.70:FF:000319">
    <property type="entry name" value="Dihydroorotate dehydrogenase (quinone)"/>
    <property type="match status" value="1"/>
</dbReference>
<dbReference type="Gene3D" id="3.20.20.70">
    <property type="entry name" value="Aldolase class I"/>
    <property type="match status" value="1"/>
</dbReference>
<dbReference type="HAMAP" id="MF_00225">
    <property type="entry name" value="DHO_dh_type2"/>
    <property type="match status" value="1"/>
</dbReference>
<dbReference type="InterPro" id="IPR013785">
    <property type="entry name" value="Aldolase_TIM"/>
</dbReference>
<dbReference type="InterPro" id="IPR050074">
    <property type="entry name" value="DHO_dehydrogenase"/>
</dbReference>
<dbReference type="InterPro" id="IPR012135">
    <property type="entry name" value="Dihydroorotate_DH_1_2"/>
</dbReference>
<dbReference type="InterPro" id="IPR005719">
    <property type="entry name" value="Dihydroorotate_DH_2"/>
</dbReference>
<dbReference type="InterPro" id="IPR005720">
    <property type="entry name" value="Dihydroorotate_DH_cat"/>
</dbReference>
<dbReference type="InterPro" id="IPR001295">
    <property type="entry name" value="Dihydroorotate_DH_CS"/>
</dbReference>
<dbReference type="NCBIfam" id="NF003649">
    <property type="entry name" value="PRK05286.2-2"/>
    <property type="match status" value="1"/>
</dbReference>
<dbReference type="NCBIfam" id="NF003652">
    <property type="entry name" value="PRK05286.2-5"/>
    <property type="match status" value="1"/>
</dbReference>
<dbReference type="NCBIfam" id="TIGR01036">
    <property type="entry name" value="pyrD_sub2"/>
    <property type="match status" value="1"/>
</dbReference>
<dbReference type="PANTHER" id="PTHR48109:SF4">
    <property type="entry name" value="DIHYDROOROTATE DEHYDROGENASE (QUINONE), MITOCHONDRIAL"/>
    <property type="match status" value="1"/>
</dbReference>
<dbReference type="PANTHER" id="PTHR48109">
    <property type="entry name" value="DIHYDROOROTATE DEHYDROGENASE (QUINONE), MITOCHONDRIAL-RELATED"/>
    <property type="match status" value="1"/>
</dbReference>
<dbReference type="Pfam" id="PF01180">
    <property type="entry name" value="DHO_dh"/>
    <property type="match status" value="1"/>
</dbReference>
<dbReference type="PIRSF" id="PIRSF000164">
    <property type="entry name" value="DHO_oxidase"/>
    <property type="match status" value="1"/>
</dbReference>
<dbReference type="SUPFAM" id="SSF51395">
    <property type="entry name" value="FMN-linked oxidoreductases"/>
    <property type="match status" value="1"/>
</dbReference>
<dbReference type="PROSITE" id="PS00911">
    <property type="entry name" value="DHODEHASE_1"/>
    <property type="match status" value="1"/>
</dbReference>
<dbReference type="PROSITE" id="PS00912">
    <property type="entry name" value="DHODEHASE_2"/>
    <property type="match status" value="1"/>
</dbReference>
<proteinExistence type="inferred from homology"/>
<feature type="chain" id="PRO_1000024179" description="Dihydroorotate dehydrogenase (quinone)">
    <location>
        <begin position="1"/>
        <end position="351"/>
    </location>
</feature>
<feature type="active site" description="Nucleophile" evidence="1">
    <location>
        <position position="181"/>
    </location>
</feature>
<feature type="binding site" evidence="1">
    <location>
        <begin position="67"/>
        <end position="71"/>
    </location>
    <ligand>
        <name>FMN</name>
        <dbReference type="ChEBI" id="CHEBI:58210"/>
    </ligand>
</feature>
<feature type="binding site" evidence="1">
    <location>
        <position position="71"/>
    </location>
    <ligand>
        <name>substrate</name>
    </ligand>
</feature>
<feature type="binding site" evidence="1">
    <location>
        <position position="91"/>
    </location>
    <ligand>
        <name>FMN</name>
        <dbReference type="ChEBI" id="CHEBI:58210"/>
    </ligand>
</feature>
<feature type="binding site" evidence="1">
    <location>
        <begin position="116"/>
        <end position="120"/>
    </location>
    <ligand>
        <name>substrate</name>
    </ligand>
</feature>
<feature type="binding site" evidence="1">
    <location>
        <position position="145"/>
    </location>
    <ligand>
        <name>FMN</name>
        <dbReference type="ChEBI" id="CHEBI:58210"/>
    </ligand>
</feature>
<feature type="binding site" evidence="1">
    <location>
        <position position="178"/>
    </location>
    <ligand>
        <name>FMN</name>
        <dbReference type="ChEBI" id="CHEBI:58210"/>
    </ligand>
</feature>
<feature type="binding site" evidence="1">
    <location>
        <position position="178"/>
    </location>
    <ligand>
        <name>substrate</name>
    </ligand>
</feature>
<feature type="binding site" evidence="1">
    <location>
        <position position="183"/>
    </location>
    <ligand>
        <name>substrate</name>
    </ligand>
</feature>
<feature type="binding site" evidence="1">
    <location>
        <position position="214"/>
    </location>
    <ligand>
        <name>FMN</name>
        <dbReference type="ChEBI" id="CHEBI:58210"/>
    </ligand>
</feature>
<feature type="binding site" evidence="1">
    <location>
        <position position="242"/>
    </location>
    <ligand>
        <name>FMN</name>
        <dbReference type="ChEBI" id="CHEBI:58210"/>
    </ligand>
</feature>
<feature type="binding site" evidence="1">
    <location>
        <begin position="243"/>
        <end position="244"/>
    </location>
    <ligand>
        <name>substrate</name>
    </ligand>
</feature>
<feature type="binding site" evidence="1">
    <location>
        <position position="262"/>
    </location>
    <ligand>
        <name>FMN</name>
        <dbReference type="ChEBI" id="CHEBI:58210"/>
    </ligand>
</feature>
<feature type="binding site" evidence="1">
    <location>
        <position position="291"/>
    </location>
    <ligand>
        <name>FMN</name>
        <dbReference type="ChEBI" id="CHEBI:58210"/>
    </ligand>
</feature>
<feature type="binding site" evidence="1">
    <location>
        <begin position="312"/>
        <end position="313"/>
    </location>
    <ligand>
        <name>FMN</name>
        <dbReference type="ChEBI" id="CHEBI:58210"/>
    </ligand>
</feature>
<evidence type="ECO:0000255" key="1">
    <source>
        <dbReference type="HAMAP-Rule" id="MF_00225"/>
    </source>
</evidence>
<name>PYRD_HELPH</name>